<comment type="subcellular location">
    <subcellularLocation>
        <location evidence="1">Cell membrane</location>
        <topology evidence="1">Multi-pass membrane protein</topology>
    </subcellularLocation>
</comment>
<comment type="similarity">
    <text evidence="1">Belongs to the UPF0397 family.</text>
</comment>
<dbReference type="EMBL" id="CP001615">
    <property type="protein sequence ID" value="ACQ71025.1"/>
    <property type="molecule type" value="Genomic_DNA"/>
</dbReference>
<dbReference type="RefSeq" id="WP_015880584.1">
    <property type="nucleotide sequence ID" value="NC_012673.1"/>
</dbReference>
<dbReference type="STRING" id="360911.EAT1b_2102"/>
<dbReference type="KEGG" id="eat:EAT1b_2102"/>
<dbReference type="eggNOG" id="COG4720">
    <property type="taxonomic scope" value="Bacteria"/>
</dbReference>
<dbReference type="HOGENOM" id="CLU_120023_0_0_9"/>
<dbReference type="OrthoDB" id="4550662at2"/>
<dbReference type="Proteomes" id="UP000000716">
    <property type="component" value="Chromosome"/>
</dbReference>
<dbReference type="GO" id="GO:0005886">
    <property type="term" value="C:plasma membrane"/>
    <property type="evidence" value="ECO:0007669"/>
    <property type="project" value="UniProtKB-SubCell"/>
</dbReference>
<dbReference type="Gene3D" id="1.10.1760.20">
    <property type="match status" value="1"/>
</dbReference>
<dbReference type="HAMAP" id="MF_01572">
    <property type="entry name" value="UPF0397"/>
    <property type="match status" value="1"/>
</dbReference>
<dbReference type="InterPro" id="IPR009825">
    <property type="entry name" value="ECF_substrate-spec-like"/>
</dbReference>
<dbReference type="InterPro" id="IPR022914">
    <property type="entry name" value="UPF0397"/>
</dbReference>
<dbReference type="NCBIfam" id="NF010182">
    <property type="entry name" value="PRK13661.1"/>
    <property type="match status" value="1"/>
</dbReference>
<dbReference type="PANTHER" id="PTHR37815">
    <property type="entry name" value="UPF0397 PROTEIN BC_2624-RELATED"/>
    <property type="match status" value="1"/>
</dbReference>
<dbReference type="PANTHER" id="PTHR37815:SF3">
    <property type="entry name" value="UPF0397 PROTEIN SPR0429"/>
    <property type="match status" value="1"/>
</dbReference>
<dbReference type="Pfam" id="PF07155">
    <property type="entry name" value="ECF-ribofla_trS"/>
    <property type="match status" value="1"/>
</dbReference>
<accession>C4L1J3</accession>
<keyword id="KW-1003">Cell membrane</keyword>
<keyword id="KW-0472">Membrane</keyword>
<keyword id="KW-0812">Transmembrane</keyword>
<keyword id="KW-1133">Transmembrane helix</keyword>
<reference key="1">
    <citation type="journal article" date="2011" name="J. Bacteriol.">
        <title>Complete genome sequence of the Thermophilic Bacterium Exiguobacterium sp. AT1b.</title>
        <authorList>
            <person name="Vishnivetskaya T.A."/>
            <person name="Lucas S."/>
            <person name="Copeland A."/>
            <person name="Lapidus A."/>
            <person name="Glavina del Rio T."/>
            <person name="Dalin E."/>
            <person name="Tice H."/>
            <person name="Bruce D.C."/>
            <person name="Goodwin L.A."/>
            <person name="Pitluck S."/>
            <person name="Saunders E."/>
            <person name="Brettin T."/>
            <person name="Detter C."/>
            <person name="Han C."/>
            <person name="Larimer F."/>
            <person name="Land M.L."/>
            <person name="Hauser L.J."/>
            <person name="Kyrpides N.C."/>
            <person name="Ovchinnikova G."/>
            <person name="Kathariou S."/>
            <person name="Ramaley R.F."/>
            <person name="Rodrigues D.F."/>
            <person name="Hendrix C."/>
            <person name="Richardson P."/>
            <person name="Tiedje J.M."/>
        </authorList>
    </citation>
    <scope>NUCLEOTIDE SEQUENCE [LARGE SCALE GENOMIC DNA]</scope>
    <source>
        <strain>ATCC BAA-1283 / AT1b</strain>
    </source>
</reference>
<evidence type="ECO:0000255" key="1">
    <source>
        <dbReference type="HAMAP-Rule" id="MF_01572"/>
    </source>
</evidence>
<sequence>MNSFTTKQIVATGIGAAVFIILSRFAAIPTGVPNTSIETAYAFLAFMAVLFGPITAGLIGLIGHALKDAILYGSPWWSWVIVSGFVGLGIGLIANRIRLEEGGLTTKKIILFNATQAVVQAIGWIVIAPVLDILIYAEPANKVFVQGAVAATSNILTVGVIGTLLLVTYAKTRSQAGSLKREA</sequence>
<proteinExistence type="inferred from homology"/>
<feature type="chain" id="PRO_0000382533" description="UPF0397 protein EAT1b_2102">
    <location>
        <begin position="1"/>
        <end position="183"/>
    </location>
</feature>
<feature type="transmembrane region" description="Helical" evidence="1">
    <location>
        <begin position="9"/>
        <end position="29"/>
    </location>
</feature>
<feature type="transmembrane region" description="Helical" evidence="1">
    <location>
        <begin position="42"/>
        <end position="62"/>
    </location>
</feature>
<feature type="transmembrane region" description="Helical" evidence="1">
    <location>
        <begin position="74"/>
        <end position="94"/>
    </location>
</feature>
<feature type="transmembrane region" description="Helical" evidence="1">
    <location>
        <begin position="117"/>
        <end position="137"/>
    </location>
</feature>
<feature type="transmembrane region" description="Helical" evidence="1">
    <location>
        <begin position="147"/>
        <end position="167"/>
    </location>
</feature>
<name>Y2102_EXISA</name>
<gene>
    <name type="ordered locus">EAT1b_2102</name>
</gene>
<organism>
    <name type="scientific">Exiguobacterium sp. (strain ATCC BAA-1283 / AT1b)</name>
    <dbReference type="NCBI Taxonomy" id="360911"/>
    <lineage>
        <taxon>Bacteria</taxon>
        <taxon>Bacillati</taxon>
        <taxon>Bacillota</taxon>
        <taxon>Bacilli</taxon>
        <taxon>Bacillales</taxon>
        <taxon>Bacillales Family XII. Incertae Sedis</taxon>
        <taxon>Exiguobacterium</taxon>
    </lineage>
</organism>
<protein>
    <recommendedName>
        <fullName evidence="1">UPF0397 protein EAT1b_2102</fullName>
    </recommendedName>
</protein>